<feature type="chain" id="PRO_1000196833" description="Thiazole synthase">
    <location>
        <begin position="1"/>
        <end position="257"/>
    </location>
</feature>
<feature type="active site" description="Schiff-base intermediate with DXP" evidence="1">
    <location>
        <position position="96"/>
    </location>
</feature>
<feature type="binding site" evidence="1">
    <location>
        <position position="157"/>
    </location>
    <ligand>
        <name>1-deoxy-D-xylulose 5-phosphate</name>
        <dbReference type="ChEBI" id="CHEBI:57792"/>
    </ligand>
</feature>
<feature type="binding site" evidence="1">
    <location>
        <begin position="184"/>
        <end position="185"/>
    </location>
    <ligand>
        <name>1-deoxy-D-xylulose 5-phosphate</name>
        <dbReference type="ChEBI" id="CHEBI:57792"/>
    </ligand>
</feature>
<feature type="binding site" evidence="1">
    <location>
        <begin position="206"/>
        <end position="207"/>
    </location>
    <ligand>
        <name>1-deoxy-D-xylulose 5-phosphate</name>
        <dbReference type="ChEBI" id="CHEBI:57792"/>
    </ligand>
</feature>
<dbReference type="EC" id="2.8.1.10" evidence="1"/>
<dbReference type="EMBL" id="CP000634">
    <property type="protein sequence ID" value="ACM38954.1"/>
    <property type="molecule type" value="Genomic_DNA"/>
</dbReference>
<dbReference type="RefSeq" id="WP_012654196.1">
    <property type="nucleotide sequence ID" value="NC_011988.1"/>
</dbReference>
<dbReference type="SMR" id="B9K256"/>
<dbReference type="STRING" id="311402.Avi_5920"/>
<dbReference type="KEGG" id="avi:Avi_5920"/>
<dbReference type="eggNOG" id="COG2022">
    <property type="taxonomic scope" value="Bacteria"/>
</dbReference>
<dbReference type="HOGENOM" id="CLU_062233_1_0_5"/>
<dbReference type="UniPathway" id="UPA00060"/>
<dbReference type="Proteomes" id="UP000001596">
    <property type="component" value="Chromosome 2"/>
</dbReference>
<dbReference type="GO" id="GO:0005737">
    <property type="term" value="C:cytoplasm"/>
    <property type="evidence" value="ECO:0007669"/>
    <property type="project" value="UniProtKB-SubCell"/>
</dbReference>
<dbReference type="GO" id="GO:1990107">
    <property type="term" value="F:thiazole synthase activity"/>
    <property type="evidence" value="ECO:0007669"/>
    <property type="project" value="UniProtKB-EC"/>
</dbReference>
<dbReference type="GO" id="GO:0009229">
    <property type="term" value="P:thiamine diphosphate biosynthetic process"/>
    <property type="evidence" value="ECO:0007669"/>
    <property type="project" value="UniProtKB-UniRule"/>
</dbReference>
<dbReference type="Gene3D" id="3.20.20.70">
    <property type="entry name" value="Aldolase class I"/>
    <property type="match status" value="1"/>
</dbReference>
<dbReference type="HAMAP" id="MF_00443">
    <property type="entry name" value="ThiG"/>
    <property type="match status" value="1"/>
</dbReference>
<dbReference type="InterPro" id="IPR013785">
    <property type="entry name" value="Aldolase_TIM"/>
</dbReference>
<dbReference type="InterPro" id="IPR033983">
    <property type="entry name" value="Thiazole_synthase_ThiG"/>
</dbReference>
<dbReference type="InterPro" id="IPR008867">
    <property type="entry name" value="ThiG"/>
</dbReference>
<dbReference type="PANTHER" id="PTHR34266">
    <property type="entry name" value="THIAZOLE SYNTHASE"/>
    <property type="match status" value="1"/>
</dbReference>
<dbReference type="PANTHER" id="PTHR34266:SF2">
    <property type="entry name" value="THIAZOLE SYNTHASE"/>
    <property type="match status" value="1"/>
</dbReference>
<dbReference type="Pfam" id="PF05690">
    <property type="entry name" value="ThiG"/>
    <property type="match status" value="1"/>
</dbReference>
<dbReference type="SUPFAM" id="SSF110399">
    <property type="entry name" value="ThiG-like"/>
    <property type="match status" value="1"/>
</dbReference>
<keyword id="KW-0963">Cytoplasm</keyword>
<keyword id="KW-1185">Reference proteome</keyword>
<keyword id="KW-0704">Schiff base</keyword>
<keyword id="KW-0784">Thiamine biosynthesis</keyword>
<keyword id="KW-0808">Transferase</keyword>
<organism>
    <name type="scientific">Allorhizobium ampelinum (strain ATCC BAA-846 / DSM 112012 / S4)</name>
    <name type="common">Agrobacterium vitis (strain S4)</name>
    <dbReference type="NCBI Taxonomy" id="311402"/>
    <lineage>
        <taxon>Bacteria</taxon>
        <taxon>Pseudomonadati</taxon>
        <taxon>Pseudomonadota</taxon>
        <taxon>Alphaproteobacteria</taxon>
        <taxon>Hyphomicrobiales</taxon>
        <taxon>Rhizobiaceae</taxon>
        <taxon>Rhizobium/Agrobacterium group</taxon>
        <taxon>Allorhizobium</taxon>
        <taxon>Allorhizobium ampelinum</taxon>
    </lineage>
</organism>
<proteinExistence type="inferred from homology"/>
<gene>
    <name evidence="1" type="primary">thiG</name>
    <name type="ordered locus">Avi_5920</name>
</gene>
<comment type="function">
    <text evidence="1">Catalyzes the rearrangement of 1-deoxy-D-xylulose 5-phosphate (DXP) to produce the thiazole phosphate moiety of thiamine. Sulfur is provided by the thiocarboxylate moiety of the carrier protein ThiS. In vitro, sulfur can be provided by H(2)S.</text>
</comment>
<comment type="catalytic activity">
    <reaction evidence="1">
        <text>[ThiS sulfur-carrier protein]-C-terminal-Gly-aminoethanethioate + 2-iminoacetate + 1-deoxy-D-xylulose 5-phosphate = [ThiS sulfur-carrier protein]-C-terminal Gly-Gly + 2-[(2R,5Z)-2-carboxy-4-methylthiazol-5(2H)-ylidene]ethyl phosphate + 2 H2O + H(+)</text>
        <dbReference type="Rhea" id="RHEA:26297"/>
        <dbReference type="Rhea" id="RHEA-COMP:12909"/>
        <dbReference type="Rhea" id="RHEA-COMP:19908"/>
        <dbReference type="ChEBI" id="CHEBI:15377"/>
        <dbReference type="ChEBI" id="CHEBI:15378"/>
        <dbReference type="ChEBI" id="CHEBI:57792"/>
        <dbReference type="ChEBI" id="CHEBI:62899"/>
        <dbReference type="ChEBI" id="CHEBI:77846"/>
        <dbReference type="ChEBI" id="CHEBI:90778"/>
        <dbReference type="ChEBI" id="CHEBI:232372"/>
        <dbReference type="EC" id="2.8.1.10"/>
    </reaction>
</comment>
<comment type="pathway">
    <text evidence="1">Cofactor biosynthesis; thiamine diphosphate biosynthesis.</text>
</comment>
<comment type="subunit">
    <text evidence="1">Homotetramer. Forms heterodimers with either ThiH or ThiS.</text>
</comment>
<comment type="subcellular location">
    <subcellularLocation>
        <location evidence="1">Cytoplasm</location>
    </subcellularLocation>
</comment>
<comment type="similarity">
    <text evidence="1">Belongs to the ThiG family.</text>
</comment>
<reference key="1">
    <citation type="journal article" date="2009" name="J. Bacteriol.">
        <title>Genome sequences of three Agrobacterium biovars help elucidate the evolution of multichromosome genomes in bacteria.</title>
        <authorList>
            <person name="Slater S.C."/>
            <person name="Goldman B.S."/>
            <person name="Goodner B."/>
            <person name="Setubal J.C."/>
            <person name="Farrand S.K."/>
            <person name="Nester E.W."/>
            <person name="Burr T.J."/>
            <person name="Banta L."/>
            <person name="Dickerman A.W."/>
            <person name="Paulsen I."/>
            <person name="Otten L."/>
            <person name="Suen G."/>
            <person name="Welch R."/>
            <person name="Almeida N.F."/>
            <person name="Arnold F."/>
            <person name="Burton O.T."/>
            <person name="Du Z."/>
            <person name="Ewing A."/>
            <person name="Godsy E."/>
            <person name="Heisel S."/>
            <person name="Houmiel K.L."/>
            <person name="Jhaveri J."/>
            <person name="Lu J."/>
            <person name="Miller N.M."/>
            <person name="Norton S."/>
            <person name="Chen Q."/>
            <person name="Phoolcharoen W."/>
            <person name="Ohlin V."/>
            <person name="Ondrusek D."/>
            <person name="Pride N."/>
            <person name="Stricklin S.L."/>
            <person name="Sun J."/>
            <person name="Wheeler C."/>
            <person name="Wilson L."/>
            <person name="Zhu H."/>
            <person name="Wood D.W."/>
        </authorList>
    </citation>
    <scope>NUCLEOTIDE SEQUENCE [LARGE SCALE GENOMIC DNA]</scope>
    <source>
        <strain>ATCC BAA-846 / DSM 112012 / S4</strain>
    </source>
</reference>
<accession>B9K256</accession>
<name>THIG_ALLAM</name>
<protein>
    <recommendedName>
        <fullName evidence="1">Thiazole synthase</fullName>
        <ecNumber evidence="1">2.8.1.10</ecNumber>
    </recommendedName>
</protein>
<sequence>MLTLYGTELSSRLLLGTARYPSPAILAEAVRRSKTEIVTVSLRRETAGGKAGGAFFELIRDLGVRVLPNTAGCHSVKEAALTAKMAREVFRTNWIKLELIGHQDTLQPDVFQLVEAARILTEDGFEVFPYTTEDLVVGEHLLGAGCKVLMPWCAPIGSAMGPQNIPGLRAMRAEFPDLPLIVDAGIGRPSHAATVMELGFDAVLLNTAVASAADPAAMAEAFANAIDAGHGGYLAGLLEPRDMAVPSTPVIGKGVFA</sequence>
<evidence type="ECO:0000255" key="1">
    <source>
        <dbReference type="HAMAP-Rule" id="MF_00443"/>
    </source>
</evidence>